<accession>A6U039</accession>
<protein>
    <recommendedName>
        <fullName evidence="1">D-alanine--D-alanyl carrier protein ligase</fullName>
        <shortName evidence="1">DCL</shortName>
        <ecNumber evidence="1">6.2.1.54</ecNumber>
    </recommendedName>
    <alternativeName>
        <fullName evidence="1">D-alanine--poly(phosphoribitol) ligase subunit 1</fullName>
    </alternativeName>
    <alternativeName>
        <fullName evidence="1">D-alanine-activating enzyme</fullName>
        <shortName evidence="1">DAE</shortName>
    </alternativeName>
</protein>
<proteinExistence type="inferred from homology"/>
<keyword id="KW-0067">ATP-binding</keyword>
<keyword id="KW-0963">Cytoplasm</keyword>
<keyword id="KW-0436">Ligase</keyword>
<keyword id="KW-0547">Nucleotide-binding</keyword>
<gene>
    <name evidence="1" type="primary">dltA</name>
    <name type="ordered locus">SaurJH1_0951</name>
</gene>
<sequence>MTDIINKLQAFADANPQSIAVRHTTDELTYQQLMDESSKLAHRLQGSKKPMILFGHMSPYMIVGMIGAIKAGCGYVPVDTSIPEDRIKMIINKVQPEFVFNTTDESFESLEGEVFTIEDIKTSQDPVIFDSQIKDNDTVYTIFTSGSTGEPKGVQIEYASLVQFTEWMLELNKSGNKQQWLNQAPFSFDLSVMAIYPCLASGGTLNLVDKNMINKPKLLNEMLTATPINIWVSTPSFMEMCLLLPTLNEEQYGSLNEFFFCGEILPHRAAKALVSRFPSATIYNTYGPTEATVAVTSIQITQEILDQYPTLPVGVERLGARLSTTDDGELVIEGQSVSLGYLKNDQKTAEVFNFDDGIRTYHTGDKAKFENGQWFIQGRIDFQIKLNGYRMELEEIETQLRQSEFVKEAIVVPVYKNDKVIHLIGAIVPTTEVTDNAEMTKNIKNDLKSRLPEYMIPRKFEWMEQLPLTSNGKIDRKKIAEVING</sequence>
<name>DLTA_STAA2</name>
<dbReference type="EC" id="6.2.1.54" evidence="1"/>
<dbReference type="EMBL" id="CP000736">
    <property type="protein sequence ID" value="ABR51807.1"/>
    <property type="molecule type" value="Genomic_DNA"/>
</dbReference>
<dbReference type="SMR" id="A6U039"/>
<dbReference type="KEGG" id="sah:SaurJH1_0951"/>
<dbReference type="HOGENOM" id="CLU_000022_2_12_9"/>
<dbReference type="UniPathway" id="UPA00556"/>
<dbReference type="GO" id="GO:0005737">
    <property type="term" value="C:cytoplasm"/>
    <property type="evidence" value="ECO:0007669"/>
    <property type="project" value="UniProtKB-SubCell"/>
</dbReference>
<dbReference type="GO" id="GO:0005524">
    <property type="term" value="F:ATP binding"/>
    <property type="evidence" value="ECO:0007669"/>
    <property type="project" value="UniProtKB-KW"/>
</dbReference>
<dbReference type="GO" id="GO:0047473">
    <property type="term" value="F:D-alanine [D-alanyl carrier protein] ligase activity"/>
    <property type="evidence" value="ECO:0007669"/>
    <property type="project" value="UniProtKB-UniRule"/>
</dbReference>
<dbReference type="GO" id="GO:0070395">
    <property type="term" value="P:lipoteichoic acid biosynthetic process"/>
    <property type="evidence" value="ECO:0007669"/>
    <property type="project" value="UniProtKB-UniRule"/>
</dbReference>
<dbReference type="CDD" id="cd05945">
    <property type="entry name" value="DltA"/>
    <property type="match status" value="1"/>
</dbReference>
<dbReference type="FunFam" id="3.30.300.30:FF:000012">
    <property type="entry name" value="D-alanine--D-alanyl carrier protein ligase"/>
    <property type="match status" value="1"/>
</dbReference>
<dbReference type="Gene3D" id="3.30.300.30">
    <property type="match status" value="1"/>
</dbReference>
<dbReference type="Gene3D" id="3.40.50.12780">
    <property type="entry name" value="N-terminal domain of ligase-like"/>
    <property type="match status" value="1"/>
</dbReference>
<dbReference type="HAMAP" id="MF_00593">
    <property type="entry name" value="DltA"/>
    <property type="match status" value="1"/>
</dbReference>
<dbReference type="InterPro" id="IPR010071">
    <property type="entry name" value="AA_adenyl_dom"/>
</dbReference>
<dbReference type="InterPro" id="IPR025110">
    <property type="entry name" value="AMP-bd_C"/>
</dbReference>
<dbReference type="InterPro" id="IPR045851">
    <property type="entry name" value="AMP-bd_C_sf"/>
</dbReference>
<dbReference type="InterPro" id="IPR000873">
    <property type="entry name" value="AMP-dep_synth/lig_dom"/>
</dbReference>
<dbReference type="InterPro" id="IPR042099">
    <property type="entry name" value="ANL_N_sf"/>
</dbReference>
<dbReference type="InterPro" id="IPR010072">
    <property type="entry name" value="DltA"/>
</dbReference>
<dbReference type="InterPro" id="IPR044507">
    <property type="entry name" value="DltA-like"/>
</dbReference>
<dbReference type="NCBIfam" id="TIGR01733">
    <property type="entry name" value="AA-adenyl-dom"/>
    <property type="match status" value="1"/>
</dbReference>
<dbReference type="NCBIfam" id="TIGR01734">
    <property type="entry name" value="D-ala-DACP-lig"/>
    <property type="match status" value="1"/>
</dbReference>
<dbReference type="NCBIfam" id="NF003417">
    <property type="entry name" value="PRK04813.1"/>
    <property type="match status" value="1"/>
</dbReference>
<dbReference type="PANTHER" id="PTHR45398">
    <property type="match status" value="1"/>
</dbReference>
<dbReference type="PANTHER" id="PTHR45398:SF1">
    <property type="entry name" value="ENZYME, PUTATIVE (JCVI)-RELATED"/>
    <property type="match status" value="1"/>
</dbReference>
<dbReference type="Pfam" id="PF00501">
    <property type="entry name" value="AMP-binding"/>
    <property type="match status" value="1"/>
</dbReference>
<dbReference type="Pfam" id="PF13193">
    <property type="entry name" value="AMP-binding_C"/>
    <property type="match status" value="1"/>
</dbReference>
<dbReference type="SUPFAM" id="SSF56801">
    <property type="entry name" value="Acetyl-CoA synthetase-like"/>
    <property type="match status" value="1"/>
</dbReference>
<feature type="chain" id="PRO_1000082423" description="D-alanine--D-alanyl carrier protein ligase">
    <location>
        <begin position="1"/>
        <end position="485"/>
    </location>
</feature>
<feature type="binding site" evidence="1">
    <location>
        <begin position="144"/>
        <end position="145"/>
    </location>
    <ligand>
        <name>ATP</name>
        <dbReference type="ChEBI" id="CHEBI:30616"/>
    </ligand>
</feature>
<feature type="binding site" evidence="1">
    <location>
        <position position="189"/>
    </location>
    <ligand>
        <name>D-alanine</name>
        <dbReference type="ChEBI" id="CHEBI:57416"/>
    </ligand>
</feature>
<feature type="binding site" evidence="1">
    <location>
        <begin position="284"/>
        <end position="289"/>
    </location>
    <ligand>
        <name>ATP</name>
        <dbReference type="ChEBI" id="CHEBI:30616"/>
    </ligand>
</feature>
<feature type="binding site" evidence="1">
    <location>
        <position position="293"/>
    </location>
    <ligand>
        <name>D-alanine</name>
        <dbReference type="ChEBI" id="CHEBI:57416"/>
    </ligand>
</feature>
<feature type="binding site" evidence="1">
    <location>
        <position position="365"/>
    </location>
    <ligand>
        <name>ATP</name>
        <dbReference type="ChEBI" id="CHEBI:30616"/>
    </ligand>
</feature>
<feature type="binding site" evidence="1">
    <location>
        <position position="473"/>
    </location>
    <ligand>
        <name>ATP</name>
        <dbReference type="ChEBI" id="CHEBI:30616"/>
    </ligand>
</feature>
<feature type="binding site" evidence="1">
    <location>
        <position position="473"/>
    </location>
    <ligand>
        <name>D-alanine</name>
        <dbReference type="ChEBI" id="CHEBI:57416"/>
    </ligand>
</feature>
<reference key="1">
    <citation type="submission" date="2007-06" db="EMBL/GenBank/DDBJ databases">
        <title>Complete sequence of chromosome of Staphylococcus aureus subsp. aureus JH1.</title>
        <authorList>
            <consortium name="US DOE Joint Genome Institute"/>
            <person name="Copeland A."/>
            <person name="Lucas S."/>
            <person name="Lapidus A."/>
            <person name="Barry K."/>
            <person name="Detter J.C."/>
            <person name="Glavina del Rio T."/>
            <person name="Hammon N."/>
            <person name="Israni S."/>
            <person name="Dalin E."/>
            <person name="Tice H."/>
            <person name="Pitluck S."/>
            <person name="Chain P."/>
            <person name="Malfatti S."/>
            <person name="Shin M."/>
            <person name="Vergez L."/>
            <person name="Schmutz J."/>
            <person name="Larimer F."/>
            <person name="Land M."/>
            <person name="Hauser L."/>
            <person name="Kyrpides N."/>
            <person name="Ivanova N."/>
            <person name="Tomasz A."/>
            <person name="Richardson P."/>
        </authorList>
    </citation>
    <scope>NUCLEOTIDE SEQUENCE [LARGE SCALE GENOMIC DNA]</scope>
    <source>
        <strain>JH1</strain>
    </source>
</reference>
<evidence type="ECO:0000255" key="1">
    <source>
        <dbReference type="HAMAP-Rule" id="MF_00593"/>
    </source>
</evidence>
<comment type="function">
    <text evidence="1">Catalyzes the first step in the D-alanylation of lipoteichoic acid (LTA), the activation of D-alanine and its transfer onto the D-alanyl carrier protein (Dcp) DltC. In an ATP-dependent two-step reaction, forms a high energy D-alanyl-AMP intermediate, followed by transfer of the D-alanyl residue as a thiol ester to the phosphopantheinyl prosthetic group of the Dcp. D-alanylation of LTA plays an important role in modulating the properties of the cell wall in Gram-positive bacteria, influencing the net charge of the cell wall.</text>
</comment>
<comment type="catalytic activity">
    <reaction evidence="1">
        <text>holo-[D-alanyl-carrier protein] + D-alanine + ATP = D-alanyl-[D-alanyl-carrier protein] + AMP + diphosphate</text>
        <dbReference type="Rhea" id="RHEA:55132"/>
        <dbReference type="Rhea" id="RHEA-COMP:14102"/>
        <dbReference type="Rhea" id="RHEA-COMP:14103"/>
        <dbReference type="ChEBI" id="CHEBI:30616"/>
        <dbReference type="ChEBI" id="CHEBI:33019"/>
        <dbReference type="ChEBI" id="CHEBI:57416"/>
        <dbReference type="ChEBI" id="CHEBI:64479"/>
        <dbReference type="ChEBI" id="CHEBI:138620"/>
        <dbReference type="ChEBI" id="CHEBI:456215"/>
        <dbReference type="EC" id="6.2.1.54"/>
    </reaction>
</comment>
<comment type="pathway">
    <text evidence="1">Cell wall biogenesis; lipoteichoic acid biosynthesis.</text>
</comment>
<comment type="subcellular location">
    <subcellularLocation>
        <location evidence="1">Cytoplasm</location>
    </subcellularLocation>
</comment>
<comment type="similarity">
    <text evidence="1">Belongs to the ATP-dependent AMP-binding enzyme family. DltA subfamily.</text>
</comment>
<organism>
    <name type="scientific">Staphylococcus aureus (strain JH1)</name>
    <dbReference type="NCBI Taxonomy" id="359787"/>
    <lineage>
        <taxon>Bacteria</taxon>
        <taxon>Bacillati</taxon>
        <taxon>Bacillota</taxon>
        <taxon>Bacilli</taxon>
        <taxon>Bacillales</taxon>
        <taxon>Staphylococcaceae</taxon>
        <taxon>Staphylococcus</taxon>
    </lineage>
</organism>